<sequence>MTPLLRTICAILCILIAVPLTFACPTKAGVSKQANKRPTYAIAHMVLDRKGLKDAIKNGANSVEIDIAAYKEGWWADHDIRGRSWGDSLEDMFKAVAKESKNIAFVWLDLKTPDMCSGATCNKDVLDPSKCKPKDKCSMNSLQELAQKILNPAGVRILYGFFGAGATDSAGFNYIQGNLKAGEAVCLSGEVENVLNVYKKKGRGVKPQQRVMDYGYTQLETGFGNCKEKGYNTCAGLRNGAKARDKGDVKRVFGWTSRVGDGERVGQLLDKAHVDGIIYGFAITRYYDHEDSRAAARDITQRVQKSDDRYMATGADKPW</sequence>
<feature type="signal peptide" evidence="3">
    <location>
        <begin position="1"/>
        <end position="23"/>
    </location>
</feature>
<feature type="chain" id="PRO_0000431986" description="Sphingomyelinase D" evidence="3">
    <location>
        <begin position="24"/>
        <end position="319"/>
    </location>
</feature>
<feature type="short sequence motif" description="SMD-tail" evidence="3">
    <location>
        <begin position="312"/>
        <end position="319"/>
    </location>
</feature>
<feature type="active site" evidence="2">
    <location>
        <position position="44"/>
    </location>
</feature>
<feature type="binding site" evidence="2">
    <location>
        <position position="64"/>
    </location>
    <ligand>
        <name>Mg(2+)</name>
        <dbReference type="ChEBI" id="CHEBI:18420"/>
    </ligand>
</feature>
<feature type="binding site" evidence="2">
    <location>
        <position position="66"/>
    </location>
    <ligand>
        <name>Mg(2+)</name>
        <dbReference type="ChEBI" id="CHEBI:18420"/>
    </ligand>
</feature>
<feature type="binding site" evidence="2">
    <location>
        <position position="109"/>
    </location>
    <ligand>
        <name>Mg(2+)</name>
        <dbReference type="ChEBI" id="CHEBI:18420"/>
    </ligand>
</feature>
<name>SMD_AJECG</name>
<gene>
    <name evidence="6" type="ORF">HCBG_06705</name>
</gene>
<evidence type="ECO:0000250" key="1">
    <source>
        <dbReference type="UniProtKB" id="B8NQ51"/>
    </source>
</evidence>
<evidence type="ECO:0000250" key="2">
    <source>
        <dbReference type="UniProtKB" id="Q8I914"/>
    </source>
</evidence>
<evidence type="ECO:0000255" key="3"/>
<evidence type="ECO:0000303" key="4">
    <source>
    </source>
</evidence>
<evidence type="ECO:0000305" key="5"/>
<evidence type="ECO:0000312" key="6">
    <source>
        <dbReference type="EMBL" id="EEH04754.1"/>
    </source>
</evidence>
<evidence type="ECO:0000312" key="7">
    <source>
        <dbReference type="Proteomes" id="UP000001631"/>
    </source>
</evidence>
<keyword id="KW-0378">Hydrolase</keyword>
<keyword id="KW-0442">Lipid degradation</keyword>
<keyword id="KW-0443">Lipid metabolism</keyword>
<keyword id="KW-0460">Magnesium</keyword>
<keyword id="KW-0479">Metal-binding</keyword>
<keyword id="KW-1185">Reference proteome</keyword>
<keyword id="KW-0964">Secreted</keyword>
<keyword id="KW-0732">Signal</keyword>
<keyword id="KW-0843">Virulence</keyword>
<accession>C0NUU1</accession>
<proteinExistence type="inferred from homology"/>
<protein>
    <recommendedName>
        <fullName evidence="4">Sphingomyelinase D</fullName>
        <shortName evidence="4">SMase D</shortName>
        <ecNumber evidence="1">3.1.4.41</ecNumber>
    </recommendedName>
</protein>
<reference key="1">
    <citation type="submission" date="2009-02" db="EMBL/GenBank/DDBJ databases">
        <title>The genome sequence of Ajellomyces capsulatus strain G186AR.</title>
        <authorList>
            <person name="Champion M."/>
            <person name="Cuomo C.A."/>
            <person name="Ma L.-J."/>
            <person name="Henn M.R."/>
            <person name="Sil A."/>
            <person name="Goldman B."/>
            <person name="Young S.K."/>
            <person name="Kodira C.D."/>
            <person name="Zeng Q."/>
            <person name="Koehrsen M."/>
            <person name="Alvarado L."/>
            <person name="Berlin A."/>
            <person name="Borenstein D."/>
            <person name="Chen Z."/>
            <person name="Engels R."/>
            <person name="Freedman E."/>
            <person name="Gellesch M."/>
            <person name="Goldberg J."/>
            <person name="Griggs A."/>
            <person name="Gujja S."/>
            <person name="Heiman D."/>
            <person name="Hepburn T."/>
            <person name="Howarth C."/>
            <person name="Jen D."/>
            <person name="Larson L."/>
            <person name="Lewis B."/>
            <person name="Mehta T."/>
            <person name="Park D."/>
            <person name="Pearson M."/>
            <person name="Roberts A."/>
            <person name="Saif S."/>
            <person name="Shea T."/>
            <person name="Shenoy N."/>
            <person name="Sisk P."/>
            <person name="Stolte C."/>
            <person name="Sykes S."/>
            <person name="Walk T."/>
            <person name="White J."/>
            <person name="Yandava C."/>
            <person name="Klein B."/>
            <person name="McEwen J.G."/>
            <person name="Puccia R."/>
            <person name="Goldman G.H."/>
            <person name="Felipe M.S."/>
            <person name="Nino-Vega G."/>
            <person name="San-Blas G."/>
            <person name="Taylor J."/>
            <person name="Mendoza L."/>
            <person name="Galagan J.E."/>
            <person name="Nusbaum C."/>
            <person name="Birren B.W."/>
        </authorList>
    </citation>
    <scope>NUCLEOTIDE SEQUENCE [LARGE SCALE GENOMIC DNA]</scope>
    <source>
        <strain evidence="7">G186AR / H82 / ATCC MYA-2454 / RMSCC 2432</strain>
    </source>
</reference>
<reference key="2">
    <citation type="journal article" date="2013" name="PLoS ONE">
        <title>Identification of new sphingomyelinases D in pathogenic fungi and other pathogenic organisms.</title>
        <authorList>
            <person name="Dias-Lopes C."/>
            <person name="Neshich I.A."/>
            <person name="Neshich G."/>
            <person name="Ortega J.M."/>
            <person name="Granier C."/>
            <person name="Chavez-Olortegui C."/>
            <person name="Molina F."/>
            <person name="Felicori L."/>
        </authorList>
    </citation>
    <scope>IDENTIFICATION</scope>
</reference>
<comment type="function">
    <text evidence="1">Catalyzes the hydrolysis of sphingomyelin. Sphingomyelinases D are produced by some spider in their venoms, but also by arthropods such as ticks, or pathogenic bacteria and fungi. They might play a role in pathogenicity through different mechanisms, such as membrane destabilization and host cell penetration, but also pulmonary inflammation and cutaneous lesions.</text>
</comment>
<comment type="catalytic activity">
    <reaction evidence="1">
        <text>a sphingomyelin + H2O = an N-acylsphing-4-enine 1-phosphate + choline + H(+)</text>
        <dbReference type="Rhea" id="RHEA:20984"/>
        <dbReference type="ChEBI" id="CHEBI:15354"/>
        <dbReference type="ChEBI" id="CHEBI:15377"/>
        <dbReference type="ChEBI" id="CHEBI:15378"/>
        <dbReference type="ChEBI" id="CHEBI:17636"/>
        <dbReference type="ChEBI" id="CHEBI:57674"/>
        <dbReference type="EC" id="3.1.4.41"/>
    </reaction>
</comment>
<comment type="cofactor">
    <cofactor evidence="2">
        <name>Mg(2+)</name>
        <dbReference type="ChEBI" id="CHEBI:18420"/>
    </cofactor>
    <text evidence="2">Binds 1 Mg(2+) ion per subunit.</text>
</comment>
<comment type="subcellular location">
    <subcellularLocation>
        <location evidence="5">Secreted</location>
    </subcellularLocation>
</comment>
<comment type="domain">
    <text evidence="4">The SMD-tail motif is highly conserved and may be responsible for structural stabilization.</text>
</comment>
<comment type="similarity">
    <text evidence="5">Belongs to the sphingomyelinase D/phospholipase D family.</text>
</comment>
<dbReference type="EC" id="3.1.4.41" evidence="1"/>
<dbReference type="EMBL" id="GG663372">
    <property type="protein sequence ID" value="EEH04754.1"/>
    <property type="molecule type" value="Genomic_DNA"/>
</dbReference>
<dbReference type="RefSeq" id="XP_045285235.1">
    <property type="nucleotide sequence ID" value="XM_045433754.1"/>
</dbReference>
<dbReference type="SMR" id="C0NUU1"/>
<dbReference type="GeneID" id="69039721"/>
<dbReference type="HOGENOM" id="CLU_059400_0_0_1"/>
<dbReference type="InParanoid" id="C0NUU1"/>
<dbReference type="Proteomes" id="UP000001631">
    <property type="component" value="Unassembled WGS sequence"/>
</dbReference>
<dbReference type="GO" id="GO:0005576">
    <property type="term" value="C:extracellular region"/>
    <property type="evidence" value="ECO:0007669"/>
    <property type="project" value="UniProtKB-SubCell"/>
</dbReference>
<dbReference type="GO" id="GO:0046872">
    <property type="term" value="F:metal ion binding"/>
    <property type="evidence" value="ECO:0007669"/>
    <property type="project" value="UniProtKB-KW"/>
</dbReference>
<dbReference type="GO" id="GO:0050290">
    <property type="term" value="F:sphingomyelin phosphodiesterase D activity"/>
    <property type="evidence" value="ECO:0007669"/>
    <property type="project" value="UniProtKB-EC"/>
</dbReference>
<dbReference type="GO" id="GO:0016042">
    <property type="term" value="P:lipid catabolic process"/>
    <property type="evidence" value="ECO:0007669"/>
    <property type="project" value="UniProtKB-KW"/>
</dbReference>
<dbReference type="CDD" id="cd08576">
    <property type="entry name" value="GDPD_like_SMaseD_PLD"/>
    <property type="match status" value="1"/>
</dbReference>
<dbReference type="Gene3D" id="3.20.20.190">
    <property type="entry name" value="Phosphatidylinositol (PI) phosphodiesterase"/>
    <property type="match status" value="1"/>
</dbReference>
<dbReference type="InterPro" id="IPR017946">
    <property type="entry name" value="PLC-like_Pdiesterase_TIM-brl"/>
</dbReference>
<organism>
    <name type="scientific">Ajellomyces capsulatus (strain G186AR / H82 / ATCC MYA-2454 / RMSCC 2432)</name>
    <name type="common">Darling's disease fungus</name>
    <name type="synonym">Histoplasma capsulatum</name>
    <dbReference type="NCBI Taxonomy" id="447093"/>
    <lineage>
        <taxon>Eukaryota</taxon>
        <taxon>Fungi</taxon>
        <taxon>Dikarya</taxon>
        <taxon>Ascomycota</taxon>
        <taxon>Pezizomycotina</taxon>
        <taxon>Eurotiomycetes</taxon>
        <taxon>Eurotiomycetidae</taxon>
        <taxon>Onygenales</taxon>
        <taxon>Ajellomycetaceae</taxon>
        <taxon>Histoplasma</taxon>
    </lineage>
</organism>